<organism>
    <name type="scientific">Lactobacillus helveticus (strain DPC 4571)</name>
    <dbReference type="NCBI Taxonomy" id="405566"/>
    <lineage>
        <taxon>Bacteria</taxon>
        <taxon>Bacillati</taxon>
        <taxon>Bacillota</taxon>
        <taxon>Bacilli</taxon>
        <taxon>Lactobacillales</taxon>
        <taxon>Lactobacillaceae</taxon>
        <taxon>Lactobacillus</taxon>
    </lineage>
</organism>
<evidence type="ECO:0000255" key="1">
    <source>
        <dbReference type="HAMAP-Rule" id="MF_00595"/>
    </source>
</evidence>
<dbReference type="EC" id="4.1.1.31" evidence="1"/>
<dbReference type="EMBL" id="CP000517">
    <property type="protein sequence ID" value="ABX27226.1"/>
    <property type="molecule type" value="Genomic_DNA"/>
</dbReference>
<dbReference type="RefSeq" id="WP_012211903.1">
    <property type="nucleotide sequence ID" value="NC_010080.1"/>
</dbReference>
<dbReference type="SMR" id="A8YVD9"/>
<dbReference type="KEGG" id="lhe:lhv_1193"/>
<dbReference type="eggNOG" id="COG2352">
    <property type="taxonomic scope" value="Bacteria"/>
</dbReference>
<dbReference type="HOGENOM" id="CLU_006557_2_0_9"/>
<dbReference type="Proteomes" id="UP000000790">
    <property type="component" value="Chromosome"/>
</dbReference>
<dbReference type="GO" id="GO:0005829">
    <property type="term" value="C:cytosol"/>
    <property type="evidence" value="ECO:0007669"/>
    <property type="project" value="TreeGrafter"/>
</dbReference>
<dbReference type="GO" id="GO:0000287">
    <property type="term" value="F:magnesium ion binding"/>
    <property type="evidence" value="ECO:0007669"/>
    <property type="project" value="UniProtKB-UniRule"/>
</dbReference>
<dbReference type="GO" id="GO:0008964">
    <property type="term" value="F:phosphoenolpyruvate carboxylase activity"/>
    <property type="evidence" value="ECO:0007669"/>
    <property type="project" value="UniProtKB-UniRule"/>
</dbReference>
<dbReference type="GO" id="GO:0015977">
    <property type="term" value="P:carbon fixation"/>
    <property type="evidence" value="ECO:0007669"/>
    <property type="project" value="UniProtKB-UniRule"/>
</dbReference>
<dbReference type="GO" id="GO:0006107">
    <property type="term" value="P:oxaloacetate metabolic process"/>
    <property type="evidence" value="ECO:0007669"/>
    <property type="project" value="UniProtKB-UniRule"/>
</dbReference>
<dbReference type="GO" id="GO:0006099">
    <property type="term" value="P:tricarboxylic acid cycle"/>
    <property type="evidence" value="ECO:0007669"/>
    <property type="project" value="InterPro"/>
</dbReference>
<dbReference type="Gene3D" id="1.20.1440.90">
    <property type="entry name" value="Phosphoenolpyruvate/pyruvate domain"/>
    <property type="match status" value="1"/>
</dbReference>
<dbReference type="HAMAP" id="MF_00595">
    <property type="entry name" value="PEPcase_type1"/>
    <property type="match status" value="1"/>
</dbReference>
<dbReference type="InterPro" id="IPR021135">
    <property type="entry name" value="PEP_COase"/>
</dbReference>
<dbReference type="InterPro" id="IPR022805">
    <property type="entry name" value="PEP_COase_bac/pln-type"/>
</dbReference>
<dbReference type="InterPro" id="IPR018129">
    <property type="entry name" value="PEP_COase_Lys_AS"/>
</dbReference>
<dbReference type="InterPro" id="IPR033129">
    <property type="entry name" value="PEPCASE_His_AS"/>
</dbReference>
<dbReference type="InterPro" id="IPR015813">
    <property type="entry name" value="Pyrv/PenolPyrv_kinase-like_dom"/>
</dbReference>
<dbReference type="NCBIfam" id="NF000584">
    <property type="entry name" value="PRK00009.1"/>
    <property type="match status" value="1"/>
</dbReference>
<dbReference type="PANTHER" id="PTHR30523">
    <property type="entry name" value="PHOSPHOENOLPYRUVATE CARBOXYLASE"/>
    <property type="match status" value="1"/>
</dbReference>
<dbReference type="PANTHER" id="PTHR30523:SF6">
    <property type="entry name" value="PHOSPHOENOLPYRUVATE CARBOXYLASE"/>
    <property type="match status" value="1"/>
</dbReference>
<dbReference type="Pfam" id="PF00311">
    <property type="entry name" value="PEPcase"/>
    <property type="match status" value="1"/>
</dbReference>
<dbReference type="PRINTS" id="PR00150">
    <property type="entry name" value="PEPCARBXLASE"/>
</dbReference>
<dbReference type="SUPFAM" id="SSF51621">
    <property type="entry name" value="Phosphoenolpyruvate/pyruvate domain"/>
    <property type="match status" value="1"/>
</dbReference>
<dbReference type="PROSITE" id="PS00781">
    <property type="entry name" value="PEPCASE_1"/>
    <property type="match status" value="1"/>
</dbReference>
<dbReference type="PROSITE" id="PS00393">
    <property type="entry name" value="PEPCASE_2"/>
    <property type="match status" value="1"/>
</dbReference>
<sequence length="912" mass="104678">MTVKKLENSSDVNVVTEEVKILTNLLNESTEQLIGKELFTKIQNLIKISADKNYQELEDQIASLDNREMIVVARYFATLPLLINISEDVELASKVNVLNNTNQDYLGKLNDTIDIVAQKKNAKEILEKVNVVPVLTAHPTQVQRKTVLELTDKIHKLLRNYREVKNGIITRVEWTEELRACIEILMQTDIIRSHKLKVSNEITNVLTYYPKSLIPAITKFTARYKELAKKHGLDIPDATPITMGMWIGGDRDGNPYVTADTLKLSATLQGQVIFEYYIKQINQLYRSISLSTSYMKPSTEVMHLSELSNDDSPFRTNEPYRRAFYYIESRLVRSEQKLLNITNQHSFLKERDLEHLDQIPAYEDAQEFKADLEVIKRSLEENRDQAVVKSYFTEILEAIDVFGFHLATIDMRQDSSVNEACVAELLKSAEICDHYSELSEKEKVSLLLNELNNDPRNLHTNNKPKSELLQKELKIYKTARDLKDRLGEDLIKQHIISHTESVSDMLEQAIMLKEYDLLDNQSARVQVVPLFETVEDLNNARDIIKEYLNLDIVKKWLVSQHNYQEVMLGYSDSNKDGGYLASCWNLYKAQKDLTAIGEELGIKITYMHGRGGTVGRGGGPSYEAITAQPFNSINDRIRMTEQGEIIQNKYGNKDAAYYNLEMLVSATVDRIASKQIVSEEYIADFRSSMDKIVTESNEIYKKLVFENPNFLDYFLQATPIKEISNLNIGSRPASRKKLSDFSSLRAIPWVFSWSQSRVMFPGWYGVGSAFKHFIDADKKNLQELQHMYQGWPFFHALLSNADMVLSKSNMEIAKQYAELCQDEKTKSVFDIIYQEWKLTKQIILQIEGHDDLLSDAPNLKNSLASRMPYFNILNYIQLEMIKRDREDEIKGVFQSIIPITINGVASGLRNSG</sequence>
<accession>A8YVD9</accession>
<keyword id="KW-0120">Carbon dioxide fixation</keyword>
<keyword id="KW-0456">Lyase</keyword>
<keyword id="KW-0460">Magnesium</keyword>
<reference key="1">
    <citation type="journal article" date="2008" name="J. Bacteriol.">
        <title>Genome sequence of Lactobacillus helveticus: an organism distinguished by selective gene loss and IS element expansion.</title>
        <authorList>
            <person name="Callanan M."/>
            <person name="Kaleta P."/>
            <person name="O'Callaghan J."/>
            <person name="O'Sullivan O."/>
            <person name="Jordan K."/>
            <person name="McAuliffe O."/>
            <person name="Sangrador-Vegas A."/>
            <person name="Slattery L."/>
            <person name="Fitzgerald G.F."/>
            <person name="Beresford T."/>
            <person name="Ross R.P."/>
        </authorList>
    </citation>
    <scope>NUCLEOTIDE SEQUENCE [LARGE SCALE GENOMIC DNA]</scope>
    <source>
        <strain>DPC 4571</strain>
    </source>
</reference>
<feature type="chain" id="PRO_1000072623" description="Phosphoenolpyruvate carboxylase">
    <location>
        <begin position="1"/>
        <end position="912"/>
    </location>
</feature>
<feature type="active site" evidence="1">
    <location>
        <position position="138"/>
    </location>
</feature>
<feature type="active site" evidence="1">
    <location>
        <position position="575"/>
    </location>
</feature>
<proteinExistence type="inferred from homology"/>
<gene>
    <name evidence="1" type="primary">ppc</name>
    <name type="ordered locus">lhv_1193</name>
</gene>
<protein>
    <recommendedName>
        <fullName evidence="1">Phosphoenolpyruvate carboxylase</fullName>
        <shortName evidence="1">PEPC</shortName>
        <shortName evidence="1">PEPCase</shortName>
        <ecNumber evidence="1">4.1.1.31</ecNumber>
    </recommendedName>
</protein>
<comment type="function">
    <text evidence="1">Forms oxaloacetate, a four-carbon dicarboxylic acid source for the tricarboxylic acid cycle.</text>
</comment>
<comment type="catalytic activity">
    <reaction evidence="1">
        <text>oxaloacetate + phosphate = phosphoenolpyruvate + hydrogencarbonate</text>
        <dbReference type="Rhea" id="RHEA:28370"/>
        <dbReference type="ChEBI" id="CHEBI:16452"/>
        <dbReference type="ChEBI" id="CHEBI:17544"/>
        <dbReference type="ChEBI" id="CHEBI:43474"/>
        <dbReference type="ChEBI" id="CHEBI:58702"/>
        <dbReference type="EC" id="4.1.1.31"/>
    </reaction>
</comment>
<comment type="cofactor">
    <cofactor evidence="1">
        <name>Mg(2+)</name>
        <dbReference type="ChEBI" id="CHEBI:18420"/>
    </cofactor>
</comment>
<comment type="similarity">
    <text evidence="1">Belongs to the PEPCase type 1 family.</text>
</comment>
<name>CAPP_LACH4</name>